<dbReference type="EMBL" id="AF047579">
    <property type="protein sequence ID" value="AAD44366.1"/>
    <property type="molecule type" value="Genomic_DNA"/>
</dbReference>
<dbReference type="RefSeq" id="WP_000837623.1">
    <property type="nucleotide sequence ID" value="NZ_VLJD01000013.1"/>
</dbReference>
<dbReference type="SMR" id="Q9XDL1"/>
<dbReference type="GO" id="GO:0005102">
    <property type="term" value="F:signaling receptor binding"/>
    <property type="evidence" value="ECO:0007669"/>
    <property type="project" value="InterPro"/>
</dbReference>
<dbReference type="GO" id="GO:0090729">
    <property type="term" value="F:toxin activity"/>
    <property type="evidence" value="ECO:0007669"/>
    <property type="project" value="UniProtKB-KW"/>
</dbReference>
<dbReference type="GO" id="GO:0030435">
    <property type="term" value="P:sporulation resulting in formation of a cellular spore"/>
    <property type="evidence" value="ECO:0007669"/>
    <property type="project" value="UniProtKB-KW"/>
</dbReference>
<dbReference type="GO" id="GO:0001907">
    <property type="term" value="P:symbiont-mediated killing of host cell"/>
    <property type="evidence" value="ECO:0007669"/>
    <property type="project" value="InterPro"/>
</dbReference>
<dbReference type="CDD" id="cd04085">
    <property type="entry name" value="delta_endotoxin_C"/>
    <property type="match status" value="1"/>
</dbReference>
<dbReference type="Gene3D" id="2.60.120.260">
    <property type="entry name" value="Galactose-binding domain-like"/>
    <property type="match status" value="1"/>
</dbReference>
<dbReference type="Gene3D" id="2.100.10.10">
    <property type="entry name" value="Pesticidal crystal protein, central domain"/>
    <property type="match status" value="1"/>
</dbReference>
<dbReference type="Gene3D" id="1.20.190.10">
    <property type="entry name" value="Pesticidal crystal protein, N-terminal domain"/>
    <property type="match status" value="1"/>
</dbReference>
<dbReference type="InterPro" id="IPR008979">
    <property type="entry name" value="Galactose-bd-like_sf"/>
</dbReference>
<dbReference type="InterPro" id="IPR038979">
    <property type="entry name" value="Pest_crys"/>
</dbReference>
<dbReference type="InterPro" id="IPR005638">
    <property type="entry name" value="Pest_crys_dom-III"/>
</dbReference>
<dbReference type="InterPro" id="IPR005639">
    <property type="entry name" value="Pest_crys_dom_I"/>
</dbReference>
<dbReference type="InterPro" id="IPR036716">
    <property type="entry name" value="Pest_crys_N_sf"/>
</dbReference>
<dbReference type="InterPro" id="IPR036399">
    <property type="entry name" value="Pest_cryst_cen_dom_sf"/>
</dbReference>
<dbReference type="InterPro" id="IPR001178">
    <property type="entry name" value="Pest_cryst_dom_II"/>
</dbReference>
<dbReference type="PANTHER" id="PTHR37003">
    <property type="entry name" value="ENDOTOXIN_N DOMAIN-CONTAINING PROTEIN-RELATED"/>
    <property type="match status" value="1"/>
</dbReference>
<dbReference type="PANTHER" id="PTHR37003:SF2">
    <property type="entry name" value="PESTICIDAL CRYSTAL PROTEIN N-TERMINAL DOMAIN-CONTAINING PROTEIN"/>
    <property type="match status" value="1"/>
</dbReference>
<dbReference type="Pfam" id="PF03944">
    <property type="entry name" value="Endotoxin_C"/>
    <property type="match status" value="1"/>
</dbReference>
<dbReference type="Pfam" id="PF00555">
    <property type="entry name" value="Endotoxin_M"/>
    <property type="match status" value="1"/>
</dbReference>
<dbReference type="Pfam" id="PF03945">
    <property type="entry name" value="Endotoxin_N"/>
    <property type="match status" value="1"/>
</dbReference>
<dbReference type="SUPFAM" id="SSF51096">
    <property type="entry name" value="delta-Endotoxin (insectocide), middle domain"/>
    <property type="match status" value="1"/>
</dbReference>
<dbReference type="SUPFAM" id="SSF56849">
    <property type="entry name" value="delta-Endotoxin (insectocide), N-terminal domain"/>
    <property type="match status" value="1"/>
</dbReference>
<dbReference type="SUPFAM" id="SSF49785">
    <property type="entry name" value="Galactose-binding domain-like"/>
    <property type="match status" value="1"/>
</dbReference>
<reference key="1">
    <citation type="journal article" date="2000" name="Curr. Microbiol.">
        <title>Cloning of a new Bacillus thuringiensis cry1I-type crystal protein gene.</title>
        <authorList>
            <person name="Choi S.-K."/>
            <person name="Shin B.-S."/>
            <person name="Kong E.-M."/>
            <person name="Rho H.M."/>
            <person name="Park S.-H."/>
        </authorList>
    </citation>
    <scope>NUCLEOTIDE SEQUENCE [GENOMIC DNA]</scope>
    <source>
        <strain>BR30</strain>
    </source>
</reference>
<evidence type="ECO:0000305" key="1"/>
<sequence length="719" mass="81403">MKSKNQNMYRSFSSNATVDKSFTDPLEHNTNMELQNSNHEDCLKMSEYESVEPFVSVSTIQTGIGIAGKILGNLGVPFAGQVASLYSFILGELWPKGKSQWEIFMEHVEELINQKISTYARNKALADLKGLGDALAVYHESLESWIENRNNTRVRSVVKNQYIALELMFVQKLPSFAVSGEEVPLLPIYAQAANLHLLLLRDASIFGKEWGLSESEISTFYNRQSSQTQEYSDYCSEWYNTGLNRLRGTNAESWVRYNQFRRDMTLMVLDLVALFPSYDTRMYPIPTSAQLTREVYTDAIGTVHPNASFASTTWYNNNAPSFSTIEAAVVRNPHLLDFLEQVTIYSLLSRWSNTQYMNMWGGHKLEFRTIGGTLNTSTQGSTNTSINPVTLPFTSRDVYRTESLAGLNLFLTQPVNGVPRVDFHWKFVTHPIASDNFYYPGYAGIGTQLQDSENELPPETTGQPNYESYSHRLSHIGLISASHVKALVYSWTHRSADRTNTINSDSITQIPLVKAFNLPSGASVVRGPGFTGGDILQRTNTGTFGDIRVNINPPFAQRYRLRIRYASTTNLEFHTSINGKAINQGNFSATMNRGEDLDYKAFRTVGFTTPFSFSNAQSTFTIGAWNFSLGNEVYIDRIEFVPVEVTYEAEYDLKKAQDEITAMFTSTNLRRLKTNVTDCHIDQVSNLVESLSDEFYLDEKRELFEIVKYAKQLNIERNM</sequence>
<name>CR1ID_BACTU</name>
<keyword id="KW-0749">Sporulation</keyword>
<keyword id="KW-0800">Toxin</keyword>
<keyword id="KW-0843">Virulence</keyword>
<feature type="chain" id="PRO_0000174051" description="Pesticidal crystal protein Cry1Id">
    <location>
        <begin position="1"/>
        <end position="719"/>
    </location>
</feature>
<proteinExistence type="evidence at transcript level"/>
<organism>
    <name type="scientific">Bacillus thuringiensis</name>
    <dbReference type="NCBI Taxonomy" id="1428"/>
    <lineage>
        <taxon>Bacteria</taxon>
        <taxon>Bacillati</taxon>
        <taxon>Bacillota</taxon>
        <taxon>Bacilli</taxon>
        <taxon>Bacillales</taxon>
        <taxon>Bacillaceae</taxon>
        <taxon>Bacillus</taxon>
        <taxon>Bacillus cereus group</taxon>
    </lineage>
</organism>
<accession>Q9XDL1</accession>
<protein>
    <recommendedName>
        <fullName>Pesticidal crystal protein Cry1Id</fullName>
    </recommendedName>
    <alternativeName>
        <fullName>81 kDa crystal protein</fullName>
    </alternativeName>
    <alternativeName>
        <fullName>Crystaline entomocidal protoxin</fullName>
    </alternativeName>
    <alternativeName>
        <fullName>Insecticidal delta-endotoxin CryII(d)</fullName>
    </alternativeName>
</protein>
<comment type="function">
    <text>Promotes colloidosmotic lysis by binding to the midgut epithelial cells of many lepidopteran larvae. Active on Plutella xylostella and on Bombyx mori.</text>
</comment>
<comment type="developmental stage">
    <text>The crystal protein is produced during sporulation and is accumulated both as an inclusion and as part of the spore coat.</text>
</comment>
<comment type="miscellaneous">
    <text>Toxic segment of the protein is located in the N-terminus.</text>
</comment>
<comment type="similarity">
    <text evidence="1">Belongs to the delta endotoxin family.</text>
</comment>
<gene>
    <name type="primary">cry1Id</name>
    <name type="synonym">cryII(d)</name>
    <name type="synonym">NRcryV</name>
</gene>